<dbReference type="EC" id="4.6.1.-" evidence="1"/>
<dbReference type="EMBL" id="BC077163">
    <property type="protein sequence ID" value="AAH77163.1"/>
    <property type="molecule type" value="mRNA"/>
</dbReference>
<dbReference type="RefSeq" id="NP_001003460.1">
    <property type="nucleotide sequence ID" value="NM_001003460.1"/>
</dbReference>
<dbReference type="SMR" id="Q6DEF6"/>
<dbReference type="FunCoup" id="Q6DEF6">
    <property type="interactions" value="572"/>
</dbReference>
<dbReference type="STRING" id="7955.ENSDARP00000002264"/>
<dbReference type="PaxDb" id="7955-ENSDARP00000002264"/>
<dbReference type="Ensembl" id="ENSDART00000007029">
    <property type="protein sequence ID" value="ENSDARP00000002264"/>
    <property type="gene ID" value="ENSDARG00000003841"/>
</dbReference>
<dbReference type="GeneID" id="445066"/>
<dbReference type="KEGG" id="dre:445066"/>
<dbReference type="AGR" id="ZFIN:ZDB-GENE-040801-197"/>
<dbReference type="CTD" id="79650"/>
<dbReference type="ZFIN" id="ZDB-GENE-040801-197">
    <property type="gene designation" value="usb1"/>
</dbReference>
<dbReference type="eggNOG" id="KOG3102">
    <property type="taxonomic scope" value="Eukaryota"/>
</dbReference>
<dbReference type="HOGENOM" id="CLU_057212_2_0_1"/>
<dbReference type="InParanoid" id="Q6DEF6"/>
<dbReference type="OMA" id="KTVVLQY"/>
<dbReference type="OrthoDB" id="49151at2759"/>
<dbReference type="PhylomeDB" id="Q6DEF6"/>
<dbReference type="TreeFam" id="TF324364"/>
<dbReference type="PRO" id="PR:Q6DEF6"/>
<dbReference type="Proteomes" id="UP000000437">
    <property type="component" value="Chromosome 25"/>
</dbReference>
<dbReference type="Bgee" id="ENSDARG00000003841">
    <property type="expression patterns" value="Expressed in camera-type eye and 25 other cell types or tissues"/>
</dbReference>
<dbReference type="GO" id="GO:0005634">
    <property type="term" value="C:nucleus"/>
    <property type="evidence" value="ECO:0000318"/>
    <property type="project" value="GO_Central"/>
</dbReference>
<dbReference type="GO" id="GO:0000175">
    <property type="term" value="F:3'-5'-RNA exonuclease activity"/>
    <property type="evidence" value="ECO:0000250"/>
    <property type="project" value="UniProtKB"/>
</dbReference>
<dbReference type="GO" id="GO:0016829">
    <property type="term" value="F:lyase activity"/>
    <property type="evidence" value="ECO:0007669"/>
    <property type="project" value="UniProtKB-KW"/>
</dbReference>
<dbReference type="GO" id="GO:1990838">
    <property type="term" value="F:poly(U)-specific exoribonuclease activity, producing 3' uridine cyclic phosphate ends"/>
    <property type="evidence" value="ECO:0000250"/>
    <property type="project" value="UniProtKB"/>
</dbReference>
<dbReference type="GO" id="GO:0030097">
    <property type="term" value="P:hemopoiesis"/>
    <property type="evidence" value="ECO:0000315"/>
    <property type="project" value="ZFIN"/>
</dbReference>
<dbReference type="GO" id="GO:0030223">
    <property type="term" value="P:neutrophil differentiation"/>
    <property type="evidence" value="ECO:0000315"/>
    <property type="project" value="ZFIN"/>
</dbReference>
<dbReference type="GO" id="GO:0043484">
    <property type="term" value="P:regulation of RNA splicing"/>
    <property type="evidence" value="ECO:0000315"/>
    <property type="project" value="ZFIN"/>
</dbReference>
<dbReference type="GO" id="GO:0034477">
    <property type="term" value="P:U6 snRNA 3'-end processing"/>
    <property type="evidence" value="ECO:0000250"/>
    <property type="project" value="UniProtKB"/>
</dbReference>
<dbReference type="FunFam" id="3.90.1140.10:FF:000002">
    <property type="entry name" value="U6 snRNA phosphodiesterase"/>
    <property type="match status" value="1"/>
</dbReference>
<dbReference type="Gene3D" id="3.90.1140.10">
    <property type="entry name" value="Cyclic phosphodiesterase"/>
    <property type="match status" value="1"/>
</dbReference>
<dbReference type="HAMAP" id="MF_03040">
    <property type="entry name" value="USB1"/>
    <property type="match status" value="1"/>
</dbReference>
<dbReference type="InterPro" id="IPR027521">
    <property type="entry name" value="Usb1"/>
</dbReference>
<dbReference type="PANTHER" id="PTHR13522">
    <property type="entry name" value="U6 SNRNA PHOSPHODIESTERASE 1"/>
    <property type="match status" value="1"/>
</dbReference>
<dbReference type="PANTHER" id="PTHR13522:SF3">
    <property type="entry name" value="U6 SNRNA PHOSPHODIESTERASE 1"/>
    <property type="match status" value="1"/>
</dbReference>
<dbReference type="Pfam" id="PF09749">
    <property type="entry name" value="HVSL"/>
    <property type="match status" value="1"/>
</dbReference>
<evidence type="ECO:0000250" key="1">
    <source>
        <dbReference type="UniProtKB" id="Q9BQ65"/>
    </source>
</evidence>
<evidence type="ECO:0000255" key="2">
    <source>
        <dbReference type="HAMAP-Rule" id="MF_03040"/>
    </source>
</evidence>
<evidence type="ECO:0000256" key="3">
    <source>
        <dbReference type="SAM" id="MobiDB-lite"/>
    </source>
</evidence>
<keyword id="KW-0378">Hydrolase</keyword>
<keyword id="KW-0456">Lyase</keyword>
<keyword id="KW-0540">Nuclease</keyword>
<keyword id="KW-0539">Nucleus</keyword>
<keyword id="KW-0597">Phosphoprotein</keyword>
<keyword id="KW-1185">Reference proteome</keyword>
<name>USB1_DANRE</name>
<gene>
    <name evidence="2" type="primary">usb1</name>
    <name type="ORF">zgc:91896</name>
</gene>
<accession>Q6DEF6</accession>
<comment type="function">
    <text evidence="1">3'-5' RNA exonuclease that trims the 3' end of oligo(U) and oligo(A) tracts of the pre-U6 small nuclear RNA (snRNA) molecule, leading to the formation of a mature U6 snRNA 3' end-terminated with a 2',3'-cyclic phosphate. Participates in the U6 snRNA 3' end processing that prevents U6 snRNA degradation. In addition also removes uridines from the 3' end of U6atac snRNA and possibly the vault RNA VTRNA1-1.</text>
</comment>
<comment type="catalytic activity">
    <reaction evidence="1">
        <text>a 3'-end uridylyl-uridine-RNA = a 3'-end 2',3'-cyclophospho-uridine-RNA + uridine</text>
        <dbReference type="Rhea" id="RHEA:46052"/>
        <dbReference type="Rhea" id="RHEA-COMP:17384"/>
        <dbReference type="Rhea" id="RHEA-COMP:17385"/>
        <dbReference type="ChEBI" id="CHEBI:16704"/>
        <dbReference type="ChEBI" id="CHEBI:85643"/>
        <dbReference type="ChEBI" id="CHEBI:85644"/>
    </reaction>
    <physiologicalReaction direction="left-to-right" evidence="1">
        <dbReference type="Rhea" id="RHEA:46053"/>
    </physiologicalReaction>
</comment>
<comment type="catalytic activity">
    <reaction evidence="1">
        <text>a 3'-end uridylyl-adenosine-RNA = a 3'-end 2',3'-cyclophospho-uridine-RNA + adenosine</text>
        <dbReference type="Rhea" id="RHEA:67896"/>
        <dbReference type="Rhea" id="RHEA-COMP:17385"/>
        <dbReference type="Rhea" id="RHEA-COMP:17386"/>
        <dbReference type="ChEBI" id="CHEBI:16335"/>
        <dbReference type="ChEBI" id="CHEBI:85644"/>
        <dbReference type="ChEBI" id="CHEBI:176518"/>
    </reaction>
    <physiologicalReaction direction="left-to-right" evidence="1">
        <dbReference type="Rhea" id="RHEA:67897"/>
    </physiologicalReaction>
</comment>
<comment type="subcellular location">
    <subcellularLocation>
        <location evidence="2">Nucleus</location>
    </subcellularLocation>
</comment>
<comment type="similarity">
    <text evidence="2">Belongs to the 2H phosphoesterase superfamily. USB1 family.</text>
</comment>
<feature type="chain" id="PRO_0000274394" description="U6 snRNA phosphodiesterase 1">
    <location>
        <begin position="1"/>
        <end position="276"/>
    </location>
</feature>
<feature type="region of interest" description="Disordered" evidence="3">
    <location>
        <begin position="1"/>
        <end position="58"/>
    </location>
</feature>
<feature type="active site" description="Proton acceptor" evidence="2">
    <location>
        <position position="131"/>
    </location>
</feature>
<feature type="active site" description="Proton donor" evidence="2">
    <location>
        <position position="219"/>
    </location>
</feature>
<feature type="binding site" evidence="1">
    <location>
        <begin position="131"/>
        <end position="133"/>
    </location>
    <ligand>
        <name>AMP</name>
        <dbReference type="ChEBI" id="CHEBI:456215"/>
    </ligand>
</feature>
<feature type="binding site" evidence="1">
    <location>
        <position position="213"/>
    </location>
    <ligand>
        <name>AMP</name>
        <dbReference type="ChEBI" id="CHEBI:456215"/>
    </ligand>
</feature>
<feature type="binding site" evidence="1">
    <location>
        <position position="213"/>
    </location>
    <ligand>
        <name>UMP</name>
        <dbReference type="ChEBI" id="CHEBI:57865"/>
    </ligand>
</feature>
<feature type="binding site" evidence="1">
    <location>
        <begin position="215"/>
        <end position="221"/>
    </location>
    <ligand>
        <name>AMP</name>
        <dbReference type="ChEBI" id="CHEBI:456215"/>
    </ligand>
</feature>
<feature type="binding site" evidence="1">
    <location>
        <begin position="217"/>
        <end position="221"/>
    </location>
    <ligand>
        <name>UMP</name>
        <dbReference type="ChEBI" id="CHEBI:57865"/>
    </ligand>
</feature>
<proteinExistence type="evidence at transcript level"/>
<organism>
    <name type="scientific">Danio rerio</name>
    <name type="common">Zebrafish</name>
    <name type="synonym">Brachydanio rerio</name>
    <dbReference type="NCBI Taxonomy" id="7955"/>
    <lineage>
        <taxon>Eukaryota</taxon>
        <taxon>Metazoa</taxon>
        <taxon>Chordata</taxon>
        <taxon>Craniata</taxon>
        <taxon>Vertebrata</taxon>
        <taxon>Euteleostomi</taxon>
        <taxon>Actinopterygii</taxon>
        <taxon>Neopterygii</taxon>
        <taxon>Teleostei</taxon>
        <taxon>Ostariophysi</taxon>
        <taxon>Cypriniformes</taxon>
        <taxon>Danionidae</taxon>
        <taxon>Danioninae</taxon>
        <taxon>Danio</taxon>
    </lineage>
</organism>
<reference key="1">
    <citation type="submission" date="2004-07" db="EMBL/GenBank/DDBJ databases">
        <authorList>
            <consortium name="NIH - Zebrafish Gene Collection (ZGC) project"/>
        </authorList>
    </citation>
    <scope>NUCLEOTIDE SEQUENCE [LARGE SCALE MRNA]</scope>
</reference>
<sequence length="276" mass="31570">MIVNYSSSSSEEESGSSSSPSGKRQKLDTETSEALDHGSAQRKVCKSSHLTPRLPLPESVKEMFRDSEELWTDKSEEHGGRLRSFQHERGNWATYVFFPYDPEEAFLEVLNKMMAAAEAHDIPLTVSEEFHLSLSKTVVLRHHWIQPFVQSIRTSLTHFQKFYCVAYKLKVYSNAEKTRTFLGMEVSTGTPHLLELSKIVDETMKEFNLSTFYEDPSFHISLAWCVGDQTERLKKACLLELQGLIDAHEDGPFHARLNCNELRCKTGNKVFVFPLQ</sequence>
<protein>
    <recommendedName>
        <fullName evidence="1">U6 snRNA phosphodiesterase 1</fullName>
    </recommendedName>
    <alternativeName>
        <fullName evidence="1">3'-5' RNA exonuclease USB1</fullName>
        <ecNumber evidence="1">4.6.1.-</ecNumber>
    </alternativeName>
</protein>